<proteinExistence type="evidence at transcript level"/>
<sequence length="423" mass="47200">MDSGVWAACIFCLLSSLPVALGHVHPECDFITQLREDERTCLQAADRMANSSSGCPRTWDGLLCWPTAGPGEWVTLPCPAFFSHFSSEPGALKRDCTTTGWSEPFPPYPEACPVPLELLTDEKSYFSTVRIVYTTGHSVSAVALFVAIAILVALRRLHCPRNYIHSQLFATFILKAGAVFLKDAALFHSENTDHCSFSTVLCKVSVATSHFATMTNFSWLLAEAVYLTCLLASTSPSTRRAFWWLVLAGWGLPLLFTGTWVGCKLAFEDVACWDLDDSSPYWWIIKGPIVLSVGVNFGLFLNIIRILLRKLEPAQGSLHTQPQYWRLSKSTLLLIPLFGIHYVIFNFLPDSAGLGIRLPLELGLGSFQGFIVAILYCFLNQEVRTEISRRWHGHDPELLPAWRTHAKWAKPSRSRAKVLTTVC</sequence>
<dbReference type="EMBL" id="L11869">
    <property type="protein sequence ID" value="AAA31047.1"/>
    <property type="molecule type" value="mRNA"/>
</dbReference>
<dbReference type="EMBL" id="U49435">
    <property type="protein sequence ID" value="AAA93391.1"/>
    <property type="molecule type" value="mRNA"/>
</dbReference>
<dbReference type="PIR" id="I46586">
    <property type="entry name" value="I46586"/>
</dbReference>
<dbReference type="RefSeq" id="NP_999200.1">
    <property type="nucleotide sequence ID" value="NM_214035.2"/>
</dbReference>
<dbReference type="SMR" id="P34999"/>
<dbReference type="FunCoup" id="P34999">
    <property type="interactions" value="117"/>
</dbReference>
<dbReference type="STRING" id="9823.ENSSSCP00000017661"/>
<dbReference type="GlyCosmos" id="P34999">
    <property type="glycosylation" value="1 site, No reported glycans"/>
</dbReference>
<dbReference type="GlyGen" id="P34999">
    <property type="glycosylation" value="1 site"/>
</dbReference>
<dbReference type="PaxDb" id="9823-ENSSSCP00000017661"/>
<dbReference type="Ensembl" id="ENSSSCT00105004636">
    <property type="protein sequence ID" value="ENSSSCP00105003438"/>
    <property type="gene ID" value="ENSSSCG00105002385"/>
</dbReference>
<dbReference type="Ensembl" id="ENSSSCT00110073006">
    <property type="protein sequence ID" value="ENSSSCP00110051686"/>
    <property type="gene ID" value="ENSSSCG00110038231"/>
</dbReference>
<dbReference type="Ensembl" id="ENSSSCT00115032498">
    <property type="protein sequence ID" value="ENSSSCP00115030882"/>
    <property type="gene ID" value="ENSSSCG00115018350"/>
</dbReference>
<dbReference type="Ensembl" id="ENSSSCT00130001210">
    <property type="protein sequence ID" value="ENSSSCP00130000917"/>
    <property type="gene ID" value="ENSSSCG00130000643"/>
</dbReference>
<dbReference type="GeneID" id="397100"/>
<dbReference type="KEGG" id="ssc:397100"/>
<dbReference type="CTD" id="2692"/>
<dbReference type="eggNOG" id="KOG4564">
    <property type="taxonomic scope" value="Eukaryota"/>
</dbReference>
<dbReference type="InParanoid" id="P34999"/>
<dbReference type="OMA" id="RAWGACI"/>
<dbReference type="OrthoDB" id="5967113at2759"/>
<dbReference type="Proteomes" id="UP000008227">
    <property type="component" value="Unplaced"/>
</dbReference>
<dbReference type="Proteomes" id="UP000314985">
    <property type="component" value="Unplaced"/>
</dbReference>
<dbReference type="Proteomes" id="UP000694570">
    <property type="component" value="Unplaced"/>
</dbReference>
<dbReference type="Proteomes" id="UP000694571">
    <property type="component" value="Unplaced"/>
</dbReference>
<dbReference type="Proteomes" id="UP000694720">
    <property type="component" value="Unplaced"/>
</dbReference>
<dbReference type="Proteomes" id="UP000694722">
    <property type="component" value="Unplaced"/>
</dbReference>
<dbReference type="Proteomes" id="UP000694723">
    <property type="component" value="Unplaced"/>
</dbReference>
<dbReference type="Proteomes" id="UP000694724">
    <property type="component" value="Unplaced"/>
</dbReference>
<dbReference type="Proteomes" id="UP000694725">
    <property type="component" value="Unplaced"/>
</dbReference>
<dbReference type="Proteomes" id="UP000694726">
    <property type="component" value="Unplaced"/>
</dbReference>
<dbReference type="Proteomes" id="UP000694727">
    <property type="component" value="Unplaced"/>
</dbReference>
<dbReference type="Proteomes" id="UP000694728">
    <property type="component" value="Unplaced"/>
</dbReference>
<dbReference type="GO" id="GO:0005886">
    <property type="term" value="C:plasma membrane"/>
    <property type="evidence" value="ECO:0000318"/>
    <property type="project" value="GO_Central"/>
</dbReference>
<dbReference type="GO" id="GO:0008528">
    <property type="term" value="F:G protein-coupled peptide receptor activity"/>
    <property type="evidence" value="ECO:0000318"/>
    <property type="project" value="GO_Central"/>
</dbReference>
<dbReference type="GO" id="GO:0019838">
    <property type="term" value="F:growth factor binding"/>
    <property type="evidence" value="ECO:0000318"/>
    <property type="project" value="GO_Central"/>
</dbReference>
<dbReference type="GO" id="GO:0016520">
    <property type="term" value="F:growth hormone-releasing hormone receptor activity"/>
    <property type="evidence" value="ECO:0000318"/>
    <property type="project" value="GO_Central"/>
</dbReference>
<dbReference type="GO" id="GO:0017046">
    <property type="term" value="F:peptide hormone binding"/>
    <property type="evidence" value="ECO:0000318"/>
    <property type="project" value="GO_Central"/>
</dbReference>
<dbReference type="GO" id="GO:0007189">
    <property type="term" value="P:adenylate cyclase-activating G protein-coupled receptor signaling pathway"/>
    <property type="evidence" value="ECO:0000318"/>
    <property type="project" value="GO_Central"/>
</dbReference>
<dbReference type="GO" id="GO:0007166">
    <property type="term" value="P:cell surface receptor signaling pathway"/>
    <property type="evidence" value="ECO:0007669"/>
    <property type="project" value="InterPro"/>
</dbReference>
<dbReference type="GO" id="GO:0008284">
    <property type="term" value="P:positive regulation of cell population proliferation"/>
    <property type="evidence" value="ECO:0000318"/>
    <property type="project" value="GO_Central"/>
</dbReference>
<dbReference type="FunFam" id="1.20.1070.10:FF:000114">
    <property type="entry name" value="Growth hormone releasing hormone receptor"/>
    <property type="match status" value="1"/>
</dbReference>
<dbReference type="FunFam" id="4.10.1240.10:FF:000014">
    <property type="entry name" value="Growth hormone-releasing hormone receptor 2"/>
    <property type="match status" value="1"/>
</dbReference>
<dbReference type="Gene3D" id="4.10.1240.10">
    <property type="entry name" value="GPCR, family 2, extracellular hormone receptor domain"/>
    <property type="match status" value="1"/>
</dbReference>
<dbReference type="Gene3D" id="1.20.1070.10">
    <property type="entry name" value="Rhodopsin 7-helix transmembrane proteins"/>
    <property type="match status" value="1"/>
</dbReference>
<dbReference type="InterPro" id="IPR050332">
    <property type="entry name" value="GPCR_2"/>
</dbReference>
<dbReference type="InterPro" id="IPR017981">
    <property type="entry name" value="GPCR_2-like_7TM"/>
</dbReference>
<dbReference type="InterPro" id="IPR036445">
    <property type="entry name" value="GPCR_2_extracell_dom_sf"/>
</dbReference>
<dbReference type="InterPro" id="IPR001879">
    <property type="entry name" value="GPCR_2_extracellular_dom"/>
</dbReference>
<dbReference type="InterPro" id="IPR003288">
    <property type="entry name" value="GPCR_2_GHRH_rcpt"/>
</dbReference>
<dbReference type="InterPro" id="IPR000832">
    <property type="entry name" value="GPCR_2_secretin-like"/>
</dbReference>
<dbReference type="InterPro" id="IPR017983">
    <property type="entry name" value="GPCR_2_secretin-like_CS"/>
</dbReference>
<dbReference type="PANTHER" id="PTHR45620:SF14">
    <property type="entry name" value="GROWTH HORMONE-RELEASING HORMONE RECEPTOR"/>
    <property type="match status" value="1"/>
</dbReference>
<dbReference type="PANTHER" id="PTHR45620">
    <property type="entry name" value="PDF RECEPTOR-LIKE PROTEIN-RELATED"/>
    <property type="match status" value="1"/>
</dbReference>
<dbReference type="Pfam" id="PF00002">
    <property type="entry name" value="7tm_2"/>
    <property type="match status" value="1"/>
</dbReference>
<dbReference type="Pfam" id="PF02793">
    <property type="entry name" value="HRM"/>
    <property type="match status" value="1"/>
</dbReference>
<dbReference type="PRINTS" id="PR01352">
    <property type="entry name" value="GHRHRECEPTOR"/>
</dbReference>
<dbReference type="PRINTS" id="PR00249">
    <property type="entry name" value="GPCRSECRETIN"/>
</dbReference>
<dbReference type="SMART" id="SM00008">
    <property type="entry name" value="HormR"/>
    <property type="match status" value="1"/>
</dbReference>
<dbReference type="SUPFAM" id="SSF81321">
    <property type="entry name" value="Family A G protein-coupled receptor-like"/>
    <property type="match status" value="1"/>
</dbReference>
<dbReference type="SUPFAM" id="SSF111418">
    <property type="entry name" value="Hormone receptor domain"/>
    <property type="match status" value="1"/>
</dbReference>
<dbReference type="PROSITE" id="PS00649">
    <property type="entry name" value="G_PROTEIN_RECEP_F2_1"/>
    <property type="match status" value="1"/>
</dbReference>
<dbReference type="PROSITE" id="PS00650">
    <property type="entry name" value="G_PROTEIN_RECEP_F2_2"/>
    <property type="match status" value="1"/>
</dbReference>
<dbReference type="PROSITE" id="PS50227">
    <property type="entry name" value="G_PROTEIN_RECEP_F2_3"/>
    <property type="match status" value="1"/>
</dbReference>
<dbReference type="PROSITE" id="PS50261">
    <property type="entry name" value="G_PROTEIN_RECEP_F2_4"/>
    <property type="match status" value="1"/>
</dbReference>
<reference key="1">
    <citation type="journal article" date="1993" name="Neuropeptides">
        <title>Structure and functional expression of a complementary DNA for porcine growth hormone-releasing hormone receptor.</title>
        <authorList>
            <person name="Hsiung H.M."/>
            <person name="Smith D.P."/>
            <person name="Zhang X.-Y."/>
            <person name="Bennett T."/>
            <person name="Rosteck P.R. Jr."/>
            <person name="Lai M.-H."/>
        </authorList>
    </citation>
    <scope>NUCLEOTIDE SEQUENCE [MRNA]</scope>
    <source>
        <tissue>Pituitary</tissue>
    </source>
</reference>
<reference key="2">
    <citation type="submission" date="1996-04" db="EMBL/GenBank/DDBJ databases">
        <authorList>
            <person name="Hazem H.A."/>
            <person name="Zhang X."/>
            <person name="Smith D.P."/>
            <person name="Heiman M.L."/>
            <person name="Hsiung H.M."/>
        </authorList>
    </citation>
    <scope>NUCLEOTIDE SEQUENCE [MRNA]</scope>
</reference>
<evidence type="ECO:0000250" key="1"/>
<evidence type="ECO:0000255" key="2"/>
<evidence type="ECO:0000305" key="3"/>
<protein>
    <recommendedName>
        <fullName>Growth hormone-releasing hormone receptor</fullName>
        <shortName>GHRH receptor</shortName>
    </recommendedName>
    <alternativeName>
        <fullName>Growth hormone-releasing factor receptor</fullName>
        <shortName>GRF receptor</shortName>
        <shortName>GRFR</shortName>
    </alternativeName>
</protein>
<organism>
    <name type="scientific">Sus scrofa</name>
    <name type="common">Pig</name>
    <dbReference type="NCBI Taxonomy" id="9823"/>
    <lineage>
        <taxon>Eukaryota</taxon>
        <taxon>Metazoa</taxon>
        <taxon>Chordata</taxon>
        <taxon>Craniata</taxon>
        <taxon>Vertebrata</taxon>
        <taxon>Euteleostomi</taxon>
        <taxon>Mammalia</taxon>
        <taxon>Eutheria</taxon>
        <taxon>Laurasiatheria</taxon>
        <taxon>Artiodactyla</taxon>
        <taxon>Suina</taxon>
        <taxon>Suidae</taxon>
        <taxon>Sus</taxon>
    </lineage>
</organism>
<feature type="signal peptide" evidence="2">
    <location>
        <begin position="1"/>
        <end position="22"/>
    </location>
</feature>
<feature type="chain" id="PRO_0000012830" description="Growth hormone-releasing hormone receptor">
    <location>
        <begin position="23"/>
        <end position="423"/>
    </location>
</feature>
<feature type="topological domain" description="Extracellular" evidence="2">
    <location>
        <begin position="23"/>
        <end position="130"/>
    </location>
</feature>
<feature type="transmembrane region" description="Helical; Name=1" evidence="2">
    <location>
        <begin position="131"/>
        <end position="151"/>
    </location>
</feature>
<feature type="topological domain" description="Cytoplasmic" evidence="2">
    <location>
        <begin position="152"/>
        <end position="167"/>
    </location>
</feature>
<feature type="transmembrane region" description="Helical; Name=2" evidence="2">
    <location>
        <begin position="168"/>
        <end position="188"/>
    </location>
</feature>
<feature type="topological domain" description="Extracellular" evidence="2">
    <location>
        <begin position="189"/>
        <end position="210"/>
    </location>
</feature>
<feature type="transmembrane region" description="Helical; Name=3" evidence="2">
    <location>
        <begin position="211"/>
        <end position="231"/>
    </location>
</feature>
<feature type="topological domain" description="Cytoplasmic" evidence="2">
    <location>
        <begin position="232"/>
        <end position="240"/>
    </location>
</feature>
<feature type="transmembrane region" description="Helical; Name=4" evidence="2">
    <location>
        <begin position="241"/>
        <end position="261"/>
    </location>
</feature>
<feature type="topological domain" description="Extracellular" evidence="2">
    <location>
        <begin position="262"/>
        <end position="283"/>
    </location>
</feature>
<feature type="transmembrane region" description="Helical; Name=5" evidence="2">
    <location>
        <begin position="284"/>
        <end position="304"/>
    </location>
</feature>
<feature type="topological domain" description="Cytoplasmic" evidence="2">
    <location>
        <begin position="305"/>
        <end position="331"/>
    </location>
</feature>
<feature type="transmembrane region" description="Helical; Name=6" evidence="2">
    <location>
        <begin position="332"/>
        <end position="352"/>
    </location>
</feature>
<feature type="topological domain" description="Extracellular" evidence="2">
    <location>
        <begin position="353"/>
        <end position="357"/>
    </location>
</feature>
<feature type="transmembrane region" description="Helical; Name=7" evidence="2">
    <location>
        <begin position="358"/>
        <end position="378"/>
    </location>
</feature>
<feature type="topological domain" description="Cytoplasmic" evidence="2">
    <location>
        <begin position="379"/>
        <end position="423"/>
    </location>
</feature>
<feature type="glycosylation site" description="N-linked (GlcNAc...) asparagine" evidence="2">
    <location>
        <position position="50"/>
    </location>
</feature>
<feature type="disulfide bond" evidence="1">
    <location>
        <begin position="41"/>
        <end position="64"/>
    </location>
</feature>
<feature type="disulfide bond" evidence="1">
    <location>
        <begin position="55"/>
        <end position="96"/>
    </location>
</feature>
<feature type="disulfide bond" evidence="1">
    <location>
        <begin position="78"/>
        <end position="112"/>
    </location>
</feature>
<feature type="sequence conflict" description="In Ref. 1; AAA31047." evidence="3" ref="1">
    <original>LTTVC</original>
    <variation>SACSRAGSSRPRAHGDTYPGLEVPGQWLCLFLT</variation>
    <location>
        <begin position="419"/>
        <end position="423"/>
    </location>
</feature>
<gene>
    <name type="primary">GHRHR</name>
</gene>
<name>GHRHR_PIG</name>
<comment type="function">
    <text>Receptor for GRF, coupled to G proteins which activate adenylyl cyclase. Stimulates somatotroph cell growth, growth hormone gene transcription and growth hormone secretion.</text>
</comment>
<comment type="subcellular location">
    <subcellularLocation>
        <location>Cell membrane</location>
        <topology>Multi-pass membrane protein</topology>
    </subcellularLocation>
</comment>
<comment type="tissue specificity">
    <text>Pituitary gland. Also detected in the lymphocytes and thymocytes.</text>
</comment>
<comment type="similarity">
    <text evidence="3">Belongs to the G-protein coupled receptor 2 family.</text>
</comment>
<keyword id="KW-1003">Cell membrane</keyword>
<keyword id="KW-1015">Disulfide bond</keyword>
<keyword id="KW-0297">G-protein coupled receptor</keyword>
<keyword id="KW-0325">Glycoprotein</keyword>
<keyword id="KW-0472">Membrane</keyword>
<keyword id="KW-0675">Receptor</keyword>
<keyword id="KW-1185">Reference proteome</keyword>
<keyword id="KW-0732">Signal</keyword>
<keyword id="KW-0807">Transducer</keyword>
<keyword id="KW-0812">Transmembrane</keyword>
<keyword id="KW-1133">Transmembrane helix</keyword>
<accession>P34999</accession>
<accession>Q28993</accession>